<comment type="function">
    <text evidence="1">May act as a double-stranded DNA (dsDNA) mimic. Probably regulates the activity of a dsDNA-binding protein.</text>
</comment>
<comment type="similarity">
    <text evidence="1">Belongs to the putative dsDNA mimic protein family.</text>
</comment>
<dbReference type="EMBL" id="CP000826">
    <property type="protein sequence ID" value="ABV41791.1"/>
    <property type="molecule type" value="Genomic_DNA"/>
</dbReference>
<dbReference type="SMR" id="A8GFA1"/>
<dbReference type="STRING" id="399741.Spro_2690"/>
<dbReference type="KEGG" id="spe:Spro_2690"/>
<dbReference type="eggNOG" id="COG3099">
    <property type="taxonomic scope" value="Bacteria"/>
</dbReference>
<dbReference type="HOGENOM" id="CLU_143392_0_0_6"/>
<dbReference type="OrthoDB" id="5677388at2"/>
<dbReference type="Gene3D" id="3.10.450.140">
    <property type="entry name" value="dsDNA mimic, putative"/>
    <property type="match status" value="1"/>
</dbReference>
<dbReference type="HAMAP" id="MF_00680">
    <property type="entry name" value="Put_dsDNA_mimic"/>
    <property type="match status" value="1"/>
</dbReference>
<dbReference type="InterPro" id="IPR007376">
    <property type="entry name" value="dsDNA_mimic_put"/>
</dbReference>
<dbReference type="InterPro" id="IPR036763">
    <property type="entry name" value="Put_dsDNA_mimic_sf"/>
</dbReference>
<dbReference type="NCBIfam" id="NF003469">
    <property type="entry name" value="PRK05094.1"/>
    <property type="match status" value="1"/>
</dbReference>
<dbReference type="Pfam" id="PF04269">
    <property type="entry name" value="DUF440"/>
    <property type="match status" value="1"/>
</dbReference>
<dbReference type="PIRSF" id="PIRSF004916">
    <property type="entry name" value="UCP004916"/>
    <property type="match status" value="1"/>
</dbReference>
<dbReference type="SUPFAM" id="SSF102816">
    <property type="entry name" value="Putative dsDNA mimic"/>
    <property type="match status" value="1"/>
</dbReference>
<name>Y2690_SERP5</name>
<feature type="chain" id="PRO_1000061973" description="Putative double-stranded DNA mimic protein Spro_2690">
    <location>
        <begin position="1"/>
        <end position="107"/>
    </location>
</feature>
<accession>A8GFA1</accession>
<reference key="1">
    <citation type="submission" date="2007-09" db="EMBL/GenBank/DDBJ databases">
        <title>Complete sequence of chromosome of Serratia proteamaculans 568.</title>
        <authorList>
            <consortium name="US DOE Joint Genome Institute"/>
            <person name="Copeland A."/>
            <person name="Lucas S."/>
            <person name="Lapidus A."/>
            <person name="Barry K."/>
            <person name="Glavina del Rio T."/>
            <person name="Dalin E."/>
            <person name="Tice H."/>
            <person name="Pitluck S."/>
            <person name="Chain P."/>
            <person name="Malfatti S."/>
            <person name="Shin M."/>
            <person name="Vergez L."/>
            <person name="Schmutz J."/>
            <person name="Larimer F."/>
            <person name="Land M."/>
            <person name="Hauser L."/>
            <person name="Kyrpides N."/>
            <person name="Kim E."/>
            <person name="Taghavi S."/>
            <person name="Newman L."/>
            <person name="Vangronsveld J."/>
            <person name="van der Lelie D."/>
            <person name="Richardson P."/>
        </authorList>
    </citation>
    <scope>NUCLEOTIDE SEQUENCE [LARGE SCALE GENOMIC DNA]</scope>
    <source>
        <strain>568</strain>
    </source>
</reference>
<protein>
    <recommendedName>
        <fullName evidence="1">Putative double-stranded DNA mimic protein Spro_2690</fullName>
    </recommendedName>
</protein>
<organism>
    <name type="scientific">Serratia proteamaculans (strain 568)</name>
    <dbReference type="NCBI Taxonomy" id="399741"/>
    <lineage>
        <taxon>Bacteria</taxon>
        <taxon>Pseudomonadati</taxon>
        <taxon>Pseudomonadota</taxon>
        <taxon>Gammaproteobacteria</taxon>
        <taxon>Enterobacterales</taxon>
        <taxon>Yersiniaceae</taxon>
        <taxon>Serratia</taxon>
    </lineage>
</organism>
<proteinExistence type="inferred from homology"/>
<sequence>MDLNNRLTEDETLEQAYDIFLELAGDNLDPADILLFNLQFEERGGAELYDPAEDWSEHVDFDLNPDFFAEVVIGLADSDGEPINDVFARVLLCREKDHKLCHILWKE</sequence>
<gene>
    <name type="ordered locus">Spro_2690</name>
</gene>
<evidence type="ECO:0000255" key="1">
    <source>
        <dbReference type="HAMAP-Rule" id="MF_00680"/>
    </source>
</evidence>